<proteinExistence type="evidence at protein level"/>
<name>KCNF1_MOUSE</name>
<evidence type="ECO:0000250" key="1">
    <source>
        <dbReference type="UniProtKB" id="D4ADX7"/>
    </source>
</evidence>
<evidence type="ECO:0000250" key="2">
    <source>
        <dbReference type="UniProtKB" id="P63142"/>
    </source>
</evidence>
<evidence type="ECO:0000250" key="3">
    <source>
        <dbReference type="UniProtKB" id="Q14721"/>
    </source>
</evidence>
<evidence type="ECO:0000255" key="4"/>
<evidence type="ECO:0000256" key="5">
    <source>
        <dbReference type="SAM" id="MobiDB-lite"/>
    </source>
</evidence>
<evidence type="ECO:0000305" key="6"/>
<evidence type="ECO:0000312" key="7">
    <source>
        <dbReference type="MGI" id="MGI:2687399"/>
    </source>
</evidence>
<sequence>MDASAEQSLPEPGSQDSVAGEDIEIVVNVGGVRQVLYGDLLSQYPETRLAELINCLAGGYDTIFSLCDDYDPGKREFYFDRDPDAFKCVIEVYYFGEVHMKKGICPICFKNEMDFWKVDLKFLDDCCKSHLSEKREELEEIARRVQLILDDLGVDAAEGRWRRCQKCVWKFLEKPESSCPARVVAVLSFLLILVSSVVMCMGTIPELQVVDSEGNRVEHPTLENVETACIGWFTLEYLLRLFSSPNKLHFALSFMNIVDVLAILPFYVSLTLTHLGARMMELTNVQQAVQALRIMRIARIFKLARHSSGLQTLTYALKRSFKELGLLLMYLAVGIFVFSALGYTMEQSHPETLFKSIPQSFWWAIITMTTVGYGDIYPKTTLGKLNAAISFLCGVIAIALPIHPIINNFVRYYNKQRVLETAAKHELELMELNSSSAEGKPGGSRSDLDTLPPEPAAREGPSWGSRLKLSHSDTFIPLLTEEKHHRTRLQSCK</sequence>
<feature type="chain" id="PRO_0000320105" description="Voltage-gated potassium channel regulatory subunit KCNF1">
    <location>
        <begin position="1"/>
        <end position="493"/>
    </location>
</feature>
<feature type="topological domain" description="Cytoplasmic" evidence="4">
    <location>
        <begin position="1"/>
        <end position="183"/>
    </location>
</feature>
<feature type="transmembrane region" description="Helical; Name=Segment S1" evidence="4">
    <location>
        <begin position="184"/>
        <end position="204"/>
    </location>
</feature>
<feature type="transmembrane region" description="Helical; Name=Segment S2" evidence="4">
    <location>
        <begin position="224"/>
        <end position="244"/>
    </location>
</feature>
<feature type="topological domain" description="Cytoplasmic" evidence="4">
    <location>
        <begin position="245"/>
        <end position="249"/>
    </location>
</feature>
<feature type="transmembrane region" description="Helical; Name=Segment S3" evidence="4">
    <location>
        <begin position="250"/>
        <end position="270"/>
    </location>
</feature>
<feature type="transmembrane region" description="Helical; Voltage-sensor; Name=Segment S4" evidence="4">
    <location>
        <begin position="290"/>
        <end position="310"/>
    </location>
</feature>
<feature type="topological domain" description="Cytoplasmic" evidence="4">
    <location>
        <begin position="311"/>
        <end position="324"/>
    </location>
</feature>
<feature type="transmembrane region" description="Helical; Name=Segment S5" evidence="4">
    <location>
        <begin position="325"/>
        <end position="345"/>
    </location>
</feature>
<feature type="intramembrane region" description="Pore-forming; Name=Segment H5" evidence="4">
    <location>
        <begin position="358"/>
        <end position="378"/>
    </location>
</feature>
<feature type="transmembrane region" description="Helical; Name=Segment S6" evidence="4">
    <location>
        <begin position="386"/>
        <end position="406"/>
    </location>
</feature>
<feature type="topological domain" description="Cytoplasmic" evidence="4">
    <location>
        <begin position="407"/>
        <end position="493"/>
    </location>
</feature>
<feature type="region of interest" description="Disordered" evidence="5">
    <location>
        <begin position="434"/>
        <end position="468"/>
    </location>
</feature>
<feature type="short sequence motif" description="Selectivity filter" evidence="2">
    <location>
        <begin position="370"/>
        <end position="375"/>
    </location>
</feature>
<protein>
    <recommendedName>
        <fullName evidence="6">Voltage-gated potassium channel regulatory subunit KCNF1</fullName>
    </recommendedName>
    <alternativeName>
        <fullName>Potassium voltage-gated channel subfamily F member 1</fullName>
    </alternativeName>
    <alternativeName>
        <fullName>Voltage-gated potassium channel subunit Kv5.1</fullName>
    </alternativeName>
</protein>
<keyword id="KW-1003">Cell membrane</keyword>
<keyword id="KW-0407">Ion channel</keyword>
<keyword id="KW-0406">Ion transport</keyword>
<keyword id="KW-0472">Membrane</keyword>
<keyword id="KW-0630">Potassium</keyword>
<keyword id="KW-0631">Potassium channel</keyword>
<keyword id="KW-0633">Potassium transport</keyword>
<keyword id="KW-1185">Reference proteome</keyword>
<keyword id="KW-0812">Transmembrane</keyword>
<keyword id="KW-1133">Transmembrane helix</keyword>
<keyword id="KW-0813">Transport</keyword>
<keyword id="KW-0851">Voltage-gated channel</keyword>
<accession>Q7TSH7</accession>
<dbReference type="EMBL" id="AK137367">
    <property type="protein sequence ID" value="BAE23327.1"/>
    <property type="molecule type" value="mRNA"/>
</dbReference>
<dbReference type="EMBL" id="BC053089">
    <property type="protein sequence ID" value="AAH53089.1"/>
    <property type="molecule type" value="mRNA"/>
</dbReference>
<dbReference type="CCDS" id="CCDS25825.2"/>
<dbReference type="RefSeq" id="NP_963289.3">
    <property type="nucleotide sequence ID" value="NM_201531.5"/>
</dbReference>
<dbReference type="SMR" id="Q7TSH7"/>
<dbReference type="BioGRID" id="238427">
    <property type="interactions" value="2"/>
</dbReference>
<dbReference type="FunCoup" id="Q7TSH7">
    <property type="interactions" value="13"/>
</dbReference>
<dbReference type="STRING" id="10090.ENSMUSP00000131480"/>
<dbReference type="GlyGen" id="Q7TSH7">
    <property type="glycosylation" value="1 site, 1 N-linked glycan (1 site)"/>
</dbReference>
<dbReference type="iPTMnet" id="Q7TSH7"/>
<dbReference type="PhosphoSitePlus" id="Q7TSH7"/>
<dbReference type="SwissPalm" id="Q7TSH7"/>
<dbReference type="PaxDb" id="10090-ENSMUSP00000131480"/>
<dbReference type="ProteomicsDB" id="269263"/>
<dbReference type="DNASU" id="382571"/>
<dbReference type="Ensembl" id="ENSMUST00000170580.3">
    <property type="protein sequence ID" value="ENSMUSP00000131480.3"/>
    <property type="gene ID" value="ENSMUSG00000051726.7"/>
</dbReference>
<dbReference type="GeneID" id="382571"/>
<dbReference type="KEGG" id="mmu:382571"/>
<dbReference type="AGR" id="MGI:2687399"/>
<dbReference type="CTD" id="3754"/>
<dbReference type="MGI" id="MGI:2687399">
    <property type="gene designation" value="Kcnf1"/>
</dbReference>
<dbReference type="eggNOG" id="KOG3713">
    <property type="taxonomic scope" value="Eukaryota"/>
</dbReference>
<dbReference type="GeneTree" id="ENSGT00940000160213"/>
<dbReference type="InParanoid" id="Q7TSH7"/>
<dbReference type="OrthoDB" id="296522at2759"/>
<dbReference type="PhylomeDB" id="Q7TSH7"/>
<dbReference type="Reactome" id="R-MMU-1296072">
    <property type="pathway name" value="Voltage gated Potassium channels"/>
</dbReference>
<dbReference type="BioGRID-ORCS" id="382571">
    <property type="hits" value="1 hit in 78 CRISPR screens"/>
</dbReference>
<dbReference type="ChiTaRS" id="Kcnf1">
    <property type="organism name" value="mouse"/>
</dbReference>
<dbReference type="PRO" id="PR:Q7TSH7"/>
<dbReference type="Proteomes" id="UP000000589">
    <property type="component" value="Chromosome 12"/>
</dbReference>
<dbReference type="RNAct" id="Q7TSH7">
    <property type="molecule type" value="protein"/>
</dbReference>
<dbReference type="GO" id="GO:0097546">
    <property type="term" value="C:ciliary base"/>
    <property type="evidence" value="ECO:0000314"/>
    <property type="project" value="MGI"/>
</dbReference>
<dbReference type="GO" id="GO:0008076">
    <property type="term" value="C:voltage-gated potassium channel complex"/>
    <property type="evidence" value="ECO:0000250"/>
    <property type="project" value="UniProtKB"/>
</dbReference>
<dbReference type="GO" id="GO:0015459">
    <property type="term" value="F:potassium channel regulator activity"/>
    <property type="evidence" value="ECO:0000250"/>
    <property type="project" value="UniProtKB"/>
</dbReference>
<dbReference type="GO" id="GO:0005249">
    <property type="term" value="F:voltage-gated potassium channel activity"/>
    <property type="evidence" value="ECO:0007669"/>
    <property type="project" value="InterPro"/>
</dbReference>
<dbReference type="GO" id="GO:1905515">
    <property type="term" value="P:non-motile cilium assembly"/>
    <property type="evidence" value="ECO:0000315"/>
    <property type="project" value="MGI"/>
</dbReference>
<dbReference type="GO" id="GO:0006813">
    <property type="term" value="P:potassium ion transport"/>
    <property type="evidence" value="ECO:0000250"/>
    <property type="project" value="UniProtKB"/>
</dbReference>
<dbReference type="GO" id="GO:0051260">
    <property type="term" value="P:protein homooligomerization"/>
    <property type="evidence" value="ECO:0007669"/>
    <property type="project" value="InterPro"/>
</dbReference>
<dbReference type="GO" id="GO:0043266">
    <property type="term" value="P:regulation of potassium ion transport"/>
    <property type="evidence" value="ECO:0007669"/>
    <property type="project" value="Ensembl"/>
</dbReference>
<dbReference type="CDD" id="cd18381">
    <property type="entry name" value="BTB_POZ_Kv5_KCNF1"/>
    <property type="match status" value="1"/>
</dbReference>
<dbReference type="FunFam" id="1.20.120.350:FF:000046">
    <property type="entry name" value="Potassium voltage-gated channel subfamily F member 1"/>
    <property type="match status" value="1"/>
</dbReference>
<dbReference type="FunFam" id="3.30.710.10:FF:000072">
    <property type="entry name" value="Potassium voltage-gated channel subfamily F member 1"/>
    <property type="match status" value="1"/>
</dbReference>
<dbReference type="FunFam" id="1.10.287.70:FF:000005">
    <property type="entry name" value="potassium voltage-gated channel subfamily G member 1"/>
    <property type="match status" value="1"/>
</dbReference>
<dbReference type="Gene3D" id="1.10.287.70">
    <property type="match status" value="1"/>
</dbReference>
<dbReference type="Gene3D" id="3.30.710.10">
    <property type="entry name" value="Potassium Channel Kv1.1, Chain A"/>
    <property type="match status" value="1"/>
</dbReference>
<dbReference type="Gene3D" id="1.20.120.350">
    <property type="entry name" value="Voltage-gated potassium channels. Chain C"/>
    <property type="match status" value="1"/>
</dbReference>
<dbReference type="InterPro" id="IPR005821">
    <property type="entry name" value="Ion_trans_dom"/>
</dbReference>
<dbReference type="InterPro" id="IPR003968">
    <property type="entry name" value="K_chnl_volt-dep_Kv"/>
</dbReference>
<dbReference type="InterPro" id="IPR003971">
    <property type="entry name" value="K_chnl_volt-dep_Kv5/Kv9"/>
</dbReference>
<dbReference type="InterPro" id="IPR048010">
    <property type="entry name" value="KCNF1-like_BTB_POZ"/>
</dbReference>
<dbReference type="InterPro" id="IPR011333">
    <property type="entry name" value="SKP1/BTB/POZ_sf"/>
</dbReference>
<dbReference type="InterPro" id="IPR003131">
    <property type="entry name" value="T1-type_BTB"/>
</dbReference>
<dbReference type="InterPro" id="IPR028325">
    <property type="entry name" value="VG_K_chnl"/>
</dbReference>
<dbReference type="InterPro" id="IPR027359">
    <property type="entry name" value="Volt_channel_dom_sf"/>
</dbReference>
<dbReference type="PANTHER" id="PTHR11537:SF171">
    <property type="entry name" value="POTASSIUM VOLTAGE-GATED CHANNEL SUBFAMILY F MEMBER 1"/>
    <property type="match status" value="1"/>
</dbReference>
<dbReference type="PANTHER" id="PTHR11537">
    <property type="entry name" value="VOLTAGE-GATED POTASSIUM CHANNEL"/>
    <property type="match status" value="1"/>
</dbReference>
<dbReference type="Pfam" id="PF02214">
    <property type="entry name" value="BTB_2"/>
    <property type="match status" value="1"/>
</dbReference>
<dbReference type="Pfam" id="PF00520">
    <property type="entry name" value="Ion_trans"/>
    <property type="match status" value="1"/>
</dbReference>
<dbReference type="PRINTS" id="PR00169">
    <property type="entry name" value="KCHANNEL"/>
</dbReference>
<dbReference type="PRINTS" id="PR01494">
    <property type="entry name" value="KV9CHANNEL"/>
</dbReference>
<dbReference type="PRINTS" id="PR01491">
    <property type="entry name" value="KVCHANNEL"/>
</dbReference>
<dbReference type="SUPFAM" id="SSF54695">
    <property type="entry name" value="POZ domain"/>
    <property type="match status" value="1"/>
</dbReference>
<dbReference type="SUPFAM" id="SSF81324">
    <property type="entry name" value="Voltage-gated potassium channels"/>
    <property type="match status" value="1"/>
</dbReference>
<gene>
    <name evidence="7" type="primary">Kcnf1</name>
</gene>
<organism>
    <name type="scientific">Mus musculus</name>
    <name type="common">Mouse</name>
    <dbReference type="NCBI Taxonomy" id="10090"/>
    <lineage>
        <taxon>Eukaryota</taxon>
        <taxon>Metazoa</taxon>
        <taxon>Chordata</taxon>
        <taxon>Craniata</taxon>
        <taxon>Vertebrata</taxon>
        <taxon>Euteleostomi</taxon>
        <taxon>Mammalia</taxon>
        <taxon>Eutheria</taxon>
        <taxon>Euarchontoglires</taxon>
        <taxon>Glires</taxon>
        <taxon>Rodentia</taxon>
        <taxon>Myomorpha</taxon>
        <taxon>Muroidea</taxon>
        <taxon>Muridae</taxon>
        <taxon>Murinae</taxon>
        <taxon>Mus</taxon>
        <taxon>Mus</taxon>
    </lineage>
</organism>
<reference key="1">
    <citation type="journal article" date="2005" name="Science">
        <title>The transcriptional landscape of the mammalian genome.</title>
        <authorList>
            <person name="Carninci P."/>
            <person name="Kasukawa T."/>
            <person name="Katayama S."/>
            <person name="Gough J."/>
            <person name="Frith M.C."/>
            <person name="Maeda N."/>
            <person name="Oyama R."/>
            <person name="Ravasi T."/>
            <person name="Lenhard B."/>
            <person name="Wells C."/>
            <person name="Kodzius R."/>
            <person name="Shimokawa K."/>
            <person name="Bajic V.B."/>
            <person name="Brenner S.E."/>
            <person name="Batalov S."/>
            <person name="Forrest A.R."/>
            <person name="Zavolan M."/>
            <person name="Davis M.J."/>
            <person name="Wilming L.G."/>
            <person name="Aidinis V."/>
            <person name="Allen J.E."/>
            <person name="Ambesi-Impiombato A."/>
            <person name="Apweiler R."/>
            <person name="Aturaliya R.N."/>
            <person name="Bailey T.L."/>
            <person name="Bansal M."/>
            <person name="Baxter L."/>
            <person name="Beisel K.W."/>
            <person name="Bersano T."/>
            <person name="Bono H."/>
            <person name="Chalk A.M."/>
            <person name="Chiu K.P."/>
            <person name="Choudhary V."/>
            <person name="Christoffels A."/>
            <person name="Clutterbuck D.R."/>
            <person name="Crowe M.L."/>
            <person name="Dalla E."/>
            <person name="Dalrymple B.P."/>
            <person name="de Bono B."/>
            <person name="Della Gatta G."/>
            <person name="di Bernardo D."/>
            <person name="Down T."/>
            <person name="Engstrom P."/>
            <person name="Fagiolini M."/>
            <person name="Faulkner G."/>
            <person name="Fletcher C.F."/>
            <person name="Fukushima T."/>
            <person name="Furuno M."/>
            <person name="Futaki S."/>
            <person name="Gariboldi M."/>
            <person name="Georgii-Hemming P."/>
            <person name="Gingeras T.R."/>
            <person name="Gojobori T."/>
            <person name="Green R.E."/>
            <person name="Gustincich S."/>
            <person name="Harbers M."/>
            <person name="Hayashi Y."/>
            <person name="Hensch T.K."/>
            <person name="Hirokawa N."/>
            <person name="Hill D."/>
            <person name="Huminiecki L."/>
            <person name="Iacono M."/>
            <person name="Ikeo K."/>
            <person name="Iwama A."/>
            <person name="Ishikawa T."/>
            <person name="Jakt M."/>
            <person name="Kanapin A."/>
            <person name="Katoh M."/>
            <person name="Kawasawa Y."/>
            <person name="Kelso J."/>
            <person name="Kitamura H."/>
            <person name="Kitano H."/>
            <person name="Kollias G."/>
            <person name="Krishnan S.P."/>
            <person name="Kruger A."/>
            <person name="Kummerfeld S.K."/>
            <person name="Kurochkin I.V."/>
            <person name="Lareau L.F."/>
            <person name="Lazarevic D."/>
            <person name="Lipovich L."/>
            <person name="Liu J."/>
            <person name="Liuni S."/>
            <person name="McWilliam S."/>
            <person name="Madan Babu M."/>
            <person name="Madera M."/>
            <person name="Marchionni L."/>
            <person name="Matsuda H."/>
            <person name="Matsuzawa S."/>
            <person name="Miki H."/>
            <person name="Mignone F."/>
            <person name="Miyake S."/>
            <person name="Morris K."/>
            <person name="Mottagui-Tabar S."/>
            <person name="Mulder N."/>
            <person name="Nakano N."/>
            <person name="Nakauchi H."/>
            <person name="Ng P."/>
            <person name="Nilsson R."/>
            <person name="Nishiguchi S."/>
            <person name="Nishikawa S."/>
            <person name="Nori F."/>
            <person name="Ohara O."/>
            <person name="Okazaki Y."/>
            <person name="Orlando V."/>
            <person name="Pang K.C."/>
            <person name="Pavan W.J."/>
            <person name="Pavesi G."/>
            <person name="Pesole G."/>
            <person name="Petrovsky N."/>
            <person name="Piazza S."/>
            <person name="Reed J."/>
            <person name="Reid J.F."/>
            <person name="Ring B.Z."/>
            <person name="Ringwald M."/>
            <person name="Rost B."/>
            <person name="Ruan Y."/>
            <person name="Salzberg S.L."/>
            <person name="Sandelin A."/>
            <person name="Schneider C."/>
            <person name="Schoenbach C."/>
            <person name="Sekiguchi K."/>
            <person name="Semple C.A."/>
            <person name="Seno S."/>
            <person name="Sessa L."/>
            <person name="Sheng Y."/>
            <person name="Shibata Y."/>
            <person name="Shimada H."/>
            <person name="Shimada K."/>
            <person name="Silva D."/>
            <person name="Sinclair B."/>
            <person name="Sperling S."/>
            <person name="Stupka E."/>
            <person name="Sugiura K."/>
            <person name="Sultana R."/>
            <person name="Takenaka Y."/>
            <person name="Taki K."/>
            <person name="Tammoja K."/>
            <person name="Tan S.L."/>
            <person name="Tang S."/>
            <person name="Taylor M.S."/>
            <person name="Tegner J."/>
            <person name="Teichmann S.A."/>
            <person name="Ueda H.R."/>
            <person name="van Nimwegen E."/>
            <person name="Verardo R."/>
            <person name="Wei C.L."/>
            <person name="Yagi K."/>
            <person name="Yamanishi H."/>
            <person name="Zabarovsky E."/>
            <person name="Zhu S."/>
            <person name="Zimmer A."/>
            <person name="Hide W."/>
            <person name="Bult C."/>
            <person name="Grimmond S.M."/>
            <person name="Teasdale R.D."/>
            <person name="Liu E.T."/>
            <person name="Brusic V."/>
            <person name="Quackenbush J."/>
            <person name="Wahlestedt C."/>
            <person name="Mattick J.S."/>
            <person name="Hume D.A."/>
            <person name="Kai C."/>
            <person name="Sasaki D."/>
            <person name="Tomaru Y."/>
            <person name="Fukuda S."/>
            <person name="Kanamori-Katayama M."/>
            <person name="Suzuki M."/>
            <person name="Aoki J."/>
            <person name="Arakawa T."/>
            <person name="Iida J."/>
            <person name="Imamura K."/>
            <person name="Itoh M."/>
            <person name="Kato T."/>
            <person name="Kawaji H."/>
            <person name="Kawagashira N."/>
            <person name="Kawashima T."/>
            <person name="Kojima M."/>
            <person name="Kondo S."/>
            <person name="Konno H."/>
            <person name="Nakano K."/>
            <person name="Ninomiya N."/>
            <person name="Nishio T."/>
            <person name="Okada M."/>
            <person name="Plessy C."/>
            <person name="Shibata K."/>
            <person name="Shiraki T."/>
            <person name="Suzuki S."/>
            <person name="Tagami M."/>
            <person name="Waki K."/>
            <person name="Watahiki A."/>
            <person name="Okamura-Oho Y."/>
            <person name="Suzuki H."/>
            <person name="Kawai J."/>
            <person name="Hayashizaki Y."/>
        </authorList>
    </citation>
    <scope>NUCLEOTIDE SEQUENCE [LARGE SCALE MRNA]</scope>
    <source>
        <strain>C57BL/6J</strain>
        <tissue>Cerebellum</tissue>
    </source>
</reference>
<reference key="2">
    <citation type="journal article" date="2004" name="Genome Res.">
        <title>The status, quality, and expansion of the NIH full-length cDNA project: the Mammalian Gene Collection (MGC).</title>
        <authorList>
            <consortium name="The MGC Project Team"/>
        </authorList>
    </citation>
    <scope>NUCLEOTIDE SEQUENCE [LARGE SCALE MRNA]</scope>
    <source>
        <strain>C57BL/6J</strain>
        <tissue>Brain</tissue>
    </source>
</reference>
<reference key="3">
    <citation type="journal article" date="2010" name="Cell">
        <title>A tissue-specific atlas of mouse protein phosphorylation and expression.</title>
        <authorList>
            <person name="Huttlin E.L."/>
            <person name="Jedrychowski M.P."/>
            <person name="Elias J.E."/>
            <person name="Goswami T."/>
            <person name="Rad R."/>
            <person name="Beausoleil S.A."/>
            <person name="Villen J."/>
            <person name="Haas W."/>
            <person name="Sowa M.E."/>
            <person name="Gygi S.P."/>
        </authorList>
    </citation>
    <scope>IDENTIFICATION BY MASS SPECTROMETRY [LARGE SCALE ANALYSIS]</scope>
    <source>
        <tissue>Brain</tissue>
    </source>
</reference>
<comment type="function">
    <text evidence="1">Regulatory alpha-subunit of the voltage-gated potassium (Kv) channel which, when coassembled with KCNB1 or KCNB2, can modulate their expression and their gating kinetics by acting on deactivation upon repolarization and inactivation during maintained depolarization. Accelerates inactivation but has relatively little effect on deactivation. Coexpression with KCNB1 or KCNB2 markedly slows inactivation. Each modulatory subunit has its own specific properties of regulation, and can lead to extensive inhibitions, to large changes in kinetics, and/or to large shifts in the voltage dependencies of the inactivation process. The gating kinetics depends on the nature and stoichiometry of the associated regulatory sunbunit. Fails to produce a potassium current when expressed alone.</text>
</comment>
<comment type="subunit">
    <text evidence="1">Heterotetramer with KCNB1 or KCNB2.</text>
</comment>
<comment type="subcellular location">
    <subcellularLocation>
        <location evidence="3">Cell membrane</location>
        <topology evidence="4">Multi-pass membrane protein</topology>
    </subcellularLocation>
</comment>
<comment type="similarity">
    <text evidence="6">Belongs to the potassium channel family. F (TC 1.A.1.2) subfamily. Kv5.1/KCNF1 sub-subfamily.</text>
</comment>